<comment type="function">
    <text evidence="1">CRISPR (clustered regularly interspaced short palindromic repeat) is an adaptive immune system that provides protection against mobile genetic elements (viruses, transposable elements and conjugative plasmids). CRISPR clusters contain spacers, sequences complementary to antecedent mobile elements, and target invading nucleic acids. CRISPR clusters are transcribed and processed into CRISPR RNA (crRNA) (By similarity).</text>
</comment>
<comment type="subunit">
    <text evidence="2">Part of the aCascade ribonucleoprotein complex, minimally composed of Csa2 and Cas5a, which binds crRNA. Other possible components of aCascade in strain P1 are Cas6b (SSO1437) and Csa5 (SSO1443), while SSO1399, Cas5b (SSO1400) and SSO1401 have sometimes been seen weakly associated. Csa2 is probably the major RNA-binding subunit. The Csa2-Cas5a-crRNA complex also binds target DNA homologous to crRNA, probably forming an R-loop. Purified aCascade forms a filament about 6 nm in width.</text>
</comment>
<comment type="miscellaneous">
    <text>The aCascade complex was purified from strain P1.</text>
</comment>
<comment type="similarity">
    <text evidence="3">Belongs to the CRISPR-associated endoribonuclease Cas6 family.</text>
</comment>
<feature type="chain" id="PRO_0000417883" description="CRISPR-associated endoribonuclease Cas6 1">
    <location>
        <begin position="1"/>
        <end position="287"/>
    </location>
</feature>
<feature type="strand" evidence="4">
    <location>
        <begin position="3"/>
        <end position="15"/>
    </location>
</feature>
<feature type="helix" evidence="4">
    <location>
        <begin position="25"/>
        <end position="32"/>
    </location>
</feature>
<feature type="strand" evidence="4">
    <location>
        <begin position="35"/>
        <end position="37"/>
    </location>
</feature>
<feature type="strand" evidence="4">
    <location>
        <begin position="53"/>
        <end position="55"/>
    </location>
</feature>
<feature type="strand" evidence="4">
    <location>
        <begin position="68"/>
        <end position="71"/>
    </location>
</feature>
<feature type="strand" evidence="4">
    <location>
        <begin position="81"/>
        <end position="88"/>
    </location>
</feature>
<feature type="strand" evidence="4">
    <location>
        <begin position="100"/>
        <end position="104"/>
    </location>
</feature>
<feature type="strand" evidence="4">
    <location>
        <begin position="107"/>
        <end position="120"/>
    </location>
</feature>
<feature type="helix" evidence="4">
    <location>
        <begin position="121"/>
        <end position="130"/>
    </location>
</feature>
<feature type="turn" evidence="4">
    <location>
        <begin position="131"/>
        <end position="133"/>
    </location>
</feature>
<feature type="strand" evidence="4">
    <location>
        <begin position="134"/>
        <end position="144"/>
    </location>
</feature>
<feature type="helix" evidence="4">
    <location>
        <begin position="148"/>
        <end position="151"/>
    </location>
</feature>
<feature type="helix" evidence="4">
    <location>
        <begin position="154"/>
        <end position="156"/>
    </location>
</feature>
<feature type="turn" evidence="4">
    <location>
        <begin position="157"/>
        <end position="162"/>
    </location>
</feature>
<feature type="helix" evidence="4">
    <location>
        <begin position="173"/>
        <end position="187"/>
    </location>
</feature>
<feature type="helix" evidence="4">
    <location>
        <begin position="194"/>
        <end position="207"/>
    </location>
</feature>
<feature type="strand" evidence="4">
    <location>
        <begin position="209"/>
        <end position="221"/>
    </location>
</feature>
<feature type="strand" evidence="4">
    <location>
        <begin position="232"/>
        <end position="243"/>
    </location>
</feature>
<feature type="helix" evidence="4">
    <location>
        <begin position="247"/>
        <end position="263"/>
    </location>
</feature>
<feature type="helix" evidence="4">
    <location>
        <begin position="269"/>
        <end position="271"/>
    </location>
</feature>
<feature type="strand" evidence="4">
    <location>
        <begin position="276"/>
        <end position="281"/>
    </location>
</feature>
<proteinExistence type="evidence at protein level"/>
<evidence type="ECO:0000250" key="1"/>
<evidence type="ECO:0000269" key="2">
    <source>
    </source>
</evidence>
<evidence type="ECO:0000305" key="3"/>
<evidence type="ECO:0007829" key="4">
    <source>
        <dbReference type="PDB" id="3ZFV"/>
    </source>
</evidence>
<gene>
    <name type="primary">cas6a</name>
    <name type="ordered locus">SSO1437</name>
</gene>
<protein>
    <recommendedName>
        <fullName>CRISPR-associated endoribonuclease Cas6 1</fullName>
        <ecNumber>3.1.-.-</ecNumber>
    </recommendedName>
</protein>
<sequence length="287" mass="32425">MPLIFKIGYNVIPLQDVILPTPSSKVLKYLIQSGKLLPSLNNLITSRDKYKPIFISHLGLNQRRIFQTNGNLKTISRGSKLSSTIAFSTQVNVLPELDEGVFETIYGKFHITIESVEIVEVEKLKEEVEKHMNDNIRVRFISPTLLSSKVLLPPSLSERYKRVNAGYSTLPSVGLIVAYAYNVYCNLIGKKEVEVRAFKFGVISNALSRIIGYDLHPVTIVIGEDSKGNLRKARGVMGWIEFDIPDEKLKRRALRYLLASSYLGIGRSRGIGFGEIKLEFIKREENH</sequence>
<accession>Q97Y96</accession>
<dbReference type="EC" id="3.1.-.-"/>
<dbReference type="EMBL" id="AE006641">
    <property type="protein sequence ID" value="AAK41670.1"/>
    <property type="molecule type" value="Genomic_DNA"/>
</dbReference>
<dbReference type="PIR" id="G90301">
    <property type="entry name" value="G90301"/>
</dbReference>
<dbReference type="RefSeq" id="WP_010923402.1">
    <property type="nucleotide sequence ID" value="NC_002754.1"/>
</dbReference>
<dbReference type="PDB" id="3ZFV">
    <property type="method" value="X-ray"/>
    <property type="resolution" value="2.80 A"/>
    <property type="chains" value="A/B/C/D=2-287"/>
</dbReference>
<dbReference type="PDBsum" id="3ZFV"/>
<dbReference type="SMR" id="Q97Y96"/>
<dbReference type="STRING" id="273057.SSO1437"/>
<dbReference type="PaxDb" id="273057-SSO1437"/>
<dbReference type="EnsemblBacteria" id="AAK41670">
    <property type="protein sequence ID" value="AAK41670"/>
    <property type="gene ID" value="SSO1437"/>
</dbReference>
<dbReference type="GeneID" id="1454449"/>
<dbReference type="KEGG" id="sso:SSO1437"/>
<dbReference type="PATRIC" id="fig|273057.12.peg.1466"/>
<dbReference type="eggNOG" id="arCOG01439">
    <property type="taxonomic scope" value="Archaea"/>
</dbReference>
<dbReference type="HOGENOM" id="CLU_929391_0_0_2"/>
<dbReference type="InParanoid" id="Q97Y96"/>
<dbReference type="EvolutionaryTrace" id="Q97Y96"/>
<dbReference type="Proteomes" id="UP000001974">
    <property type="component" value="Chromosome"/>
</dbReference>
<dbReference type="GO" id="GO:0004519">
    <property type="term" value="F:endonuclease activity"/>
    <property type="evidence" value="ECO:0007669"/>
    <property type="project" value="UniProtKB-KW"/>
</dbReference>
<dbReference type="GO" id="GO:0051607">
    <property type="term" value="P:defense response to virus"/>
    <property type="evidence" value="ECO:0007669"/>
    <property type="project" value="UniProtKB-KW"/>
</dbReference>
<dbReference type="CDD" id="cd09652">
    <property type="entry name" value="Cas6"/>
    <property type="match status" value="1"/>
</dbReference>
<dbReference type="Gene3D" id="2.40.30.310">
    <property type="match status" value="1"/>
</dbReference>
<dbReference type="Gene3D" id="3.30.70.1900">
    <property type="match status" value="1"/>
</dbReference>
<dbReference type="InterPro" id="IPR041165">
    <property type="entry name" value="Cas6_N_arch"/>
</dbReference>
<dbReference type="InterPro" id="IPR019267">
    <property type="entry name" value="CRISPR-assoc_Cas6_C"/>
</dbReference>
<dbReference type="InterPro" id="IPR010156">
    <property type="entry name" value="CRISPR-assoc_prot_Cas6"/>
</dbReference>
<dbReference type="NCBIfam" id="TIGR01877">
    <property type="entry name" value="cas_cas6"/>
    <property type="match status" value="1"/>
</dbReference>
<dbReference type="Pfam" id="PF17952">
    <property type="entry name" value="Cas6_N"/>
    <property type="match status" value="1"/>
</dbReference>
<dbReference type="Pfam" id="PF10040">
    <property type="entry name" value="CRISPR_Cas6"/>
    <property type="match status" value="1"/>
</dbReference>
<name>CAS6A_SACS2</name>
<keyword id="KW-0002">3D-structure</keyword>
<keyword id="KW-0051">Antiviral defense</keyword>
<keyword id="KW-0255">Endonuclease</keyword>
<keyword id="KW-0378">Hydrolase</keyword>
<keyword id="KW-0540">Nuclease</keyword>
<keyword id="KW-1185">Reference proteome</keyword>
<organism>
    <name type="scientific">Saccharolobus solfataricus (strain ATCC 35092 / DSM 1617 / JCM 11322 / P2)</name>
    <name type="common">Sulfolobus solfataricus</name>
    <dbReference type="NCBI Taxonomy" id="273057"/>
    <lineage>
        <taxon>Archaea</taxon>
        <taxon>Thermoproteota</taxon>
        <taxon>Thermoprotei</taxon>
        <taxon>Sulfolobales</taxon>
        <taxon>Sulfolobaceae</taxon>
        <taxon>Saccharolobus</taxon>
    </lineage>
</organism>
<reference key="1">
    <citation type="journal article" date="2001" name="Proc. Natl. Acad. Sci. U.S.A.">
        <title>The complete genome of the crenarchaeon Sulfolobus solfataricus P2.</title>
        <authorList>
            <person name="She Q."/>
            <person name="Singh R.K."/>
            <person name="Confalonieri F."/>
            <person name="Zivanovic Y."/>
            <person name="Allard G."/>
            <person name="Awayez M.J."/>
            <person name="Chan-Weiher C.C.-Y."/>
            <person name="Clausen I.G."/>
            <person name="Curtis B.A."/>
            <person name="De Moors A."/>
            <person name="Erauso G."/>
            <person name="Fletcher C."/>
            <person name="Gordon P.M.K."/>
            <person name="Heikamp-de Jong I."/>
            <person name="Jeffries A.C."/>
            <person name="Kozera C.J."/>
            <person name="Medina N."/>
            <person name="Peng X."/>
            <person name="Thi-Ngoc H.P."/>
            <person name="Redder P."/>
            <person name="Schenk M.E."/>
            <person name="Theriault C."/>
            <person name="Tolstrup N."/>
            <person name="Charlebois R.L."/>
            <person name="Doolittle W.F."/>
            <person name="Duguet M."/>
            <person name="Gaasterland T."/>
            <person name="Garrett R.A."/>
            <person name="Ragan M.A."/>
            <person name="Sensen C.W."/>
            <person name="Van der Oost J."/>
        </authorList>
    </citation>
    <scope>NUCLEOTIDE SEQUENCE [LARGE SCALE GENOMIC DNA]</scope>
    <source>
        <strain>ATCC 35092 / DSM 1617 / JCM 11322 / P2</strain>
    </source>
</reference>
<reference key="2">
    <citation type="journal article" date="2011" name="J. Biol. Chem.">
        <title>Structural and functional characterization of an archaeal clustered regularly interspaced short palindromic repeat (CRISPR)-associated complex for antiviral defense (CASCADE).</title>
        <authorList>
            <person name="Lintner N.G."/>
            <person name="Kerou M."/>
            <person name="Brumfield S.K."/>
            <person name="Graham S."/>
            <person name="Liu H."/>
            <person name="Naismith J.H."/>
            <person name="Sdano M."/>
            <person name="Peng N."/>
            <person name="She Q."/>
            <person name="Copie V."/>
            <person name="Young M.J."/>
            <person name="White M.F."/>
            <person name="Lawrence C.M."/>
        </authorList>
    </citation>
    <scope>SUBUNIT</scope>
    <source>
        <strain>ATCC 35091 / DSM 1616 / JCM 8930 / NBRC 15331 / P1</strain>
    </source>
</reference>